<feature type="chain" id="PRO_0000093302" description="Retinal-specific phospholipid-transporting ATPase ABCA4">
    <location>
        <begin position="1"/>
        <end position="2310"/>
    </location>
</feature>
<feature type="topological domain" description="Cytoplasmic" evidence="11">
    <location>
        <begin position="1"/>
        <end position="21"/>
    </location>
</feature>
<feature type="transmembrane region" description="Helical" evidence="3">
    <location>
        <begin position="22"/>
        <end position="42"/>
    </location>
</feature>
<feature type="topological domain" description="Extracellular" evidence="2">
    <location>
        <begin position="43"/>
        <end position="646"/>
    </location>
</feature>
<feature type="transmembrane region" description="Helical" evidence="3">
    <location>
        <begin position="647"/>
        <end position="667"/>
    </location>
</feature>
<feature type="topological domain" description="Cytoplasmic" evidence="11">
    <location>
        <begin position="668"/>
        <end position="699"/>
    </location>
</feature>
<feature type="transmembrane region" description="Helical" evidence="3">
    <location>
        <begin position="700"/>
        <end position="720"/>
    </location>
</feature>
<feature type="topological domain" description="Extracellular" evidence="11">
    <location>
        <begin position="721"/>
        <end position="730"/>
    </location>
</feature>
<feature type="transmembrane region" description="Helical" evidence="3">
    <location>
        <begin position="731"/>
        <end position="751"/>
    </location>
</feature>
<feature type="topological domain" description="Cytoplasmic" evidence="11">
    <location>
        <begin position="752"/>
        <end position="759"/>
    </location>
</feature>
<feature type="transmembrane region" description="Helical" evidence="3">
    <location>
        <begin position="760"/>
        <end position="780"/>
    </location>
</feature>
<feature type="topological domain" description="Extracellular" evidence="11">
    <location>
        <begin position="781"/>
        <end position="835"/>
    </location>
</feature>
<feature type="transmembrane region" description="Helical" evidence="3">
    <location>
        <begin position="836"/>
        <end position="856"/>
    </location>
</feature>
<feature type="topological domain" description="Cytoplasmic" evidence="11">
    <location>
        <begin position="857"/>
        <end position="1375"/>
    </location>
</feature>
<feature type="transmembrane region" description="Helical" evidence="3">
    <location>
        <begin position="1376"/>
        <end position="1396"/>
    </location>
</feature>
<feature type="topological domain" description="Extracellular" evidence="2">
    <location>
        <begin position="1397"/>
        <end position="1726"/>
    </location>
</feature>
<feature type="transmembrane region" description="Helical" evidence="3">
    <location>
        <begin position="1727"/>
        <end position="1747"/>
    </location>
</feature>
<feature type="topological domain" description="Cytoplasmic" evidence="11">
    <location>
        <begin position="1748"/>
        <end position="1758"/>
    </location>
</feature>
<feature type="transmembrane region" description="Helical" evidence="3">
    <location>
        <begin position="1759"/>
        <end position="1779"/>
    </location>
</feature>
<feature type="topological domain" description="Extracellular" evidence="11">
    <location>
        <begin position="1780"/>
        <end position="1791"/>
    </location>
</feature>
<feature type="transmembrane region" description="Helical" evidence="3">
    <location>
        <begin position="1792"/>
        <end position="1812"/>
    </location>
</feature>
<feature type="topological domain" description="Cytoplasmic" evidence="11">
    <location>
        <begin position="1813"/>
        <end position="1830"/>
    </location>
</feature>
<feature type="transmembrane region" description="Helical" evidence="3">
    <location>
        <begin position="1831"/>
        <end position="1851"/>
    </location>
</feature>
<feature type="topological domain" description="Extracellular" evidence="11">
    <location>
        <begin position="1852"/>
        <end position="1872"/>
    </location>
</feature>
<feature type="transmembrane region" description="Helical" evidence="3">
    <location>
        <begin position="1873"/>
        <end position="1893"/>
    </location>
</feature>
<feature type="topological domain" description="Cytoplasmic" evidence="11">
    <location>
        <begin position="1894"/>
        <end position="2310"/>
    </location>
</feature>
<feature type="domain" description="ABC transporter 1" evidence="4">
    <location>
        <begin position="929"/>
        <end position="1160"/>
    </location>
</feature>
<feature type="domain" description="ABC transporter 2" evidence="4">
    <location>
        <begin position="1937"/>
        <end position="2169"/>
    </location>
</feature>
<feature type="region of interest" description="Disordered" evidence="5">
    <location>
        <begin position="891"/>
        <end position="910"/>
    </location>
</feature>
<feature type="region of interest" description="Disordered" evidence="5">
    <location>
        <begin position="1311"/>
        <end position="1344"/>
    </location>
</feature>
<feature type="region of interest" description="Essential for ATP binding and ATPase activity" evidence="2">
    <location>
        <begin position="2243"/>
        <end position="2248"/>
    </location>
</feature>
<feature type="region of interest" description="Disordered" evidence="5">
    <location>
        <begin position="2266"/>
        <end position="2310"/>
    </location>
</feature>
<feature type="compositionally biased region" description="Basic and acidic residues" evidence="5">
    <location>
        <begin position="2301"/>
        <end position="2310"/>
    </location>
</feature>
<feature type="binding site" evidence="2">
    <location>
        <position position="336"/>
    </location>
    <ligand>
        <name>Mg(2+)</name>
        <dbReference type="ChEBI" id="CHEBI:18420"/>
        <label>1</label>
        <note>in protein in complex with N-all-trans-retinylidenephosphatidylethanolamine</note>
    </ligand>
</feature>
<feature type="binding site" evidence="2">
    <location>
        <position position="338"/>
    </location>
    <ligand>
        <name>Mg(2+)</name>
        <dbReference type="ChEBI" id="CHEBI:18420"/>
        <label>1</label>
        <note>in protein in complex with N-all-trans-retinylidenephosphatidylethanolamine</note>
    </ligand>
</feature>
<feature type="binding site" evidence="2">
    <location>
        <position position="587"/>
    </location>
    <ligand>
        <name>an N-all-trans-retinylidenephosphatidylethanolamine</name>
        <dbReference type="ChEBI" id="CHEBI:167884"/>
    </ligand>
</feature>
<feature type="binding site" evidence="2">
    <location>
        <position position="653"/>
    </location>
    <ligand>
        <name>an N-all-trans-retinylidenephosphatidylethanolamine</name>
        <dbReference type="ChEBI" id="CHEBI:167884"/>
    </ligand>
</feature>
<feature type="binding site" evidence="2">
    <location>
        <position position="938"/>
    </location>
    <ligand>
        <name>ATP</name>
        <dbReference type="ChEBI" id="CHEBI:30616"/>
        <label>1</label>
    </ligand>
</feature>
<feature type="binding site" evidence="2">
    <location>
        <position position="966"/>
    </location>
    <ligand>
        <name>ATP</name>
        <dbReference type="ChEBI" id="CHEBI:30616"/>
        <label>1</label>
    </ligand>
</feature>
<feature type="binding site" evidence="2">
    <location>
        <position position="969"/>
    </location>
    <ligand>
        <name>ATP</name>
        <dbReference type="ChEBI" id="CHEBI:30616"/>
        <label>1</label>
    </ligand>
</feature>
<feature type="binding site" evidence="2">
    <location>
        <position position="970"/>
    </location>
    <ligand>
        <name>Mg(2+)</name>
        <dbReference type="ChEBI" id="CHEBI:18420"/>
        <label>2</label>
        <note>in ATP-bound protein</note>
    </ligand>
</feature>
<feature type="binding site" evidence="2">
    <location>
        <position position="971"/>
    </location>
    <ligand>
        <name>ATP</name>
        <dbReference type="ChEBI" id="CHEBI:30616"/>
        <label>1</label>
    </ligand>
</feature>
<feature type="binding site" evidence="2">
    <location>
        <position position="1010"/>
    </location>
    <ligand>
        <name>ATP</name>
        <dbReference type="ChEBI" id="CHEBI:30616"/>
        <label>1</label>
    </ligand>
</feature>
<feature type="binding site" evidence="2">
    <location>
        <position position="1054"/>
    </location>
    <ligand>
        <name>ATP</name>
        <dbReference type="ChEBI" id="CHEBI:30616"/>
        <label>2</label>
    </ligand>
</feature>
<feature type="binding site" evidence="2">
    <location>
        <position position="1064"/>
    </location>
    <ligand>
        <name>ATP</name>
        <dbReference type="ChEBI" id="CHEBI:30616"/>
        <label>2</label>
    </ligand>
</feature>
<feature type="binding site" evidence="2">
    <location>
        <position position="1065"/>
    </location>
    <ligand>
        <name>ATP</name>
        <dbReference type="ChEBI" id="CHEBI:30616"/>
        <label>2</label>
    </ligand>
</feature>
<feature type="binding site" evidence="2">
    <location>
        <position position="1118"/>
    </location>
    <ligand>
        <name>ATP</name>
        <dbReference type="ChEBI" id="CHEBI:30616"/>
        <label>1</label>
    </ligand>
</feature>
<feature type="binding site" evidence="2">
    <location>
        <position position="1973"/>
    </location>
    <ligand>
        <name>ATP</name>
        <dbReference type="ChEBI" id="CHEBI:30616"/>
        <label>2</label>
    </ligand>
</feature>
<feature type="binding site" evidence="2">
    <location>
        <position position="1974"/>
    </location>
    <ligand>
        <name>ATP</name>
        <dbReference type="ChEBI" id="CHEBI:30616"/>
        <label>2</label>
    </ligand>
</feature>
<feature type="binding site" evidence="2">
    <location>
        <position position="1977"/>
    </location>
    <ligand>
        <name>ATP</name>
        <dbReference type="ChEBI" id="CHEBI:30616"/>
        <label>2</label>
    </ligand>
</feature>
<feature type="binding site" evidence="2">
    <location>
        <position position="1978"/>
    </location>
    <ligand>
        <name>ATP</name>
        <dbReference type="ChEBI" id="CHEBI:30616"/>
        <label>2</label>
    </ligand>
</feature>
<feature type="binding site" evidence="2">
    <location>
        <position position="1978"/>
    </location>
    <ligand>
        <name>Mg(2+)</name>
        <dbReference type="ChEBI" id="CHEBI:18420"/>
        <label>3</label>
        <note>in ATP-bound protein</note>
    </ligand>
</feature>
<feature type="binding site" evidence="2">
    <location>
        <position position="1979"/>
    </location>
    <ligand>
        <name>ATP</name>
        <dbReference type="ChEBI" id="CHEBI:30616"/>
        <label>2</label>
    </ligand>
</feature>
<feature type="binding site" evidence="2">
    <location>
        <position position="2072"/>
    </location>
    <ligand>
        <name>ATP</name>
        <dbReference type="ChEBI" id="CHEBI:30616"/>
        <label>1</label>
    </ligand>
</feature>
<feature type="site" description="Cleavage; by trypsin" evidence="1">
    <location>
        <position position="1309"/>
    </location>
</feature>
<feature type="modified residue" description="Phosphothreonine" evidence="1">
    <location>
        <position position="901"/>
    </location>
</feature>
<feature type="modified residue" description="Phosphoserine" evidence="1">
    <location>
        <position position="1185"/>
    </location>
</feature>
<feature type="glycosylation site" description="N-linked (GlcNAc...) asparagine" evidence="3">
    <location>
        <position position="98"/>
    </location>
</feature>
<feature type="glycosylation site" description="N-linked (GlcNAc...) asparagine" evidence="3">
    <location>
        <position position="415"/>
    </location>
</feature>
<feature type="glycosylation site" description="N-linked (GlcNAc...) asparagine" evidence="3">
    <location>
        <position position="504"/>
    </location>
</feature>
<feature type="glycosylation site" description="N-linked (GlcNAc...) asparagine" evidence="3">
    <location>
        <position position="1468"/>
    </location>
</feature>
<feature type="glycosylation site" description="N-linked (GlcNAc...) asparagine" evidence="3">
    <location>
        <position position="1528"/>
    </location>
</feature>
<feature type="glycosylation site" description="N-linked (GlcNAc...) asparagine" evidence="3">
    <location>
        <position position="1587"/>
    </location>
</feature>
<feature type="glycosylation site" description="N-linked (GlcNAc...) asparagine" evidence="3">
    <location>
        <position position="1661"/>
    </location>
</feature>
<feature type="disulfide bond" evidence="2">
    <location>
        <begin position="54"/>
        <end position="81"/>
    </location>
</feature>
<feature type="disulfide bond" evidence="2">
    <location>
        <begin position="75"/>
        <end position="324"/>
    </location>
</feature>
<feature type="disulfide bond" evidence="2">
    <location>
        <begin position="370"/>
        <end position="519"/>
    </location>
</feature>
<feature type="disulfide bond" description="Interchain" evidence="2">
    <location>
        <begin position="641"/>
        <end position="1489"/>
    </location>
</feature>
<feature type="disulfide bond" evidence="2">
    <location>
        <begin position="1443"/>
        <end position="1454"/>
    </location>
</feature>
<feature type="disulfide bond" evidence="2">
    <location>
        <begin position="1487"/>
        <end position="1501"/>
    </location>
</feature>
<keyword id="KW-0067">ATP-binding</keyword>
<keyword id="KW-0966">Cell projection</keyword>
<keyword id="KW-1015">Disulfide bond</keyword>
<keyword id="KW-0256">Endoplasmic reticulum</keyword>
<keyword id="KW-0325">Glycoprotein</keyword>
<keyword id="KW-0378">Hydrolase</keyword>
<keyword id="KW-0460">Magnesium</keyword>
<keyword id="KW-0472">Membrane</keyword>
<keyword id="KW-0479">Metal-binding</keyword>
<keyword id="KW-0547">Nucleotide-binding</keyword>
<keyword id="KW-0597">Phosphoprotein</keyword>
<keyword id="KW-1185">Reference proteome</keyword>
<keyword id="KW-0677">Repeat</keyword>
<keyword id="KW-0716">Sensory transduction</keyword>
<keyword id="KW-1278">Translocase</keyword>
<keyword id="KW-0812">Transmembrane</keyword>
<keyword id="KW-1133">Transmembrane helix</keyword>
<keyword id="KW-0813">Transport</keyword>
<keyword id="KW-0844">Vision</keyword>
<sequence>MGFLRQIQLLLWKNWTLRKRQKIRFVVELVWPLSLFLVLIWLRNANPLYSQHECHFPNKAMPSAGLLPWLQGIFCNMNNPCFQNPTPGESPGTVSNYNNSILARVYRDFQELFMDTPEVQHLGQVWAELRTLSQFMDTLRTHPERFAGRGLQIRDILKDEEALTLFLMRNIGLSDSVAHLLVNSQVRVEQFAYGVPDLELTDIACSEALLQRFIIFSQRRGAQTVRDALCPLSQVTLQWIEDTLYADVDFFKLFHVLPTLLDSSSQGINLRFWGGILSDLSPRMQKFIHRPSVQDLLWVSRPLLQNGGPETFTQLMSILSDLLCGYPEGGGSRVFSFNWYEDNNYKAFLGIDSTRKDPAYSYDKRTTSFCNSLIQSLESNPLTKIAWRAAKPLLMGKILFTPDSPAARRIMKNANSTFEELDRVRKLVKAWEEVGPQIWYFFEKSTQMTVIRDTLQHPTVKDFINRQLGEEGITTEAVLNFFSNGPQEKQADDMTSFDWRDIFNITDRFLRLANQYLECLVLDKFESYDDEVQLTQRALSLLEENRFWAGVVFPGMYPWASSLPPHVKYKIRMDIDVVEKTNKIKDRYWDSGPRADPVEDFRYIWGGFAYLQDMVEQGIVKSQMQAEPPIGVYLQQMPYPCFVDDSFMIILNRCFPIFMVLAWIYSVSMTVKGIVLEKELRLKETLKNQGVSNAVIWCTWFLDSFSIMALSIFLLTLFIMHGRILHYSDPFILFLFLLAFATATIMQSFLLSTLFSKASLAAACSGVIYFTLYLPHVLCFAWQDRMTADLKTTVSLLSSVAFGFGTEYLVRFEEQGLGLQWSNIGKSPLEGDEFSFLLSMKMMLLDAALYGLLAWYLDQVFPGDYGTPLPWYFLLQESYWLGGEGCSTREERALEKTEPLTEEMEDPEHPEGMNDSFFERELPGLVPGVCVKNLVKVFEPSGRPAVDRLNITFYENQITAFLGHNGAGKTTTLSILTGLLPPTSGTVLIGGKDIETNLDVVRQSLGMCPQHNILFHHLTVAEHILFYAQLKGRSWEEAQLEMEAMLEDTGLHHKRNEEAQDLSGGMQRKLSVAIAFVGDSKVVVLDEPTSGVDPYSRRSIWDLLLKYRSGRTIIMSTHHMDEADLLGDRIAIISQGRLYCSGTPLFLKNCFGTGFYLTLVRKMKNIQSQRGGCEGVCSCTSKGFSTRCPTRVDEITEEQVLDGDVQELMDLVYHHVPEAKLVECIGQELIFLLPNKNFKQRAYASLFRELEETLADLGLSSFGISDTPLEEIFLKVTEDAGAGSMFVGGAQQKREQAGLRHPCSAPTEKLRQYAQAPHTCSPGQVDPPKGQPSPEPEDPGVPFNTGARLILQHVQALLVKRFHHTIRSRKDFVAQIVLPATFVFLALMLSIIVPPFGEFPALTLHPWMYGHQYTFFSMDEPNNEHLEVLADVLLNRPGFGNRCLKEEWLPEYPCINATSWKTPSVSPNITHLFQKQKWTAAHPSPSCKCSTREKLTMLPECPEGAGGLPPPQRTQRSTEVLQDLTNRNISDYLVKTYPALIRSSLKSKFWVNEQRYGGISIGGKLPAIPISGEALVGFLSGLGQMMNVSGGPVTREASKEMLDFLKHLETTDNIKVWFNNKGWHALVSFLNVAHNAILRASLPRDRDPEEYGITVISQPLNLTKEQLSDITVLTTSVDAVVAICVIFAMSFVPASFVLYLIQERVTKAKHLQFISGVSPTTYWLTNFLWDIMNYAVSAGLVVGIFIGFQKKAYTSPDNLPALVSLLMLYGWAVIPMMYPASFLFEVPSTAYVALSCANLFIGINSSAITFVLELFENNRTLLRFNAMLRKLLIVFPHFCLGRGLIDLALSQAVTDVYAQFGEEYSANPFQWDLIGKNLVAMAIEGVVYFLLTLLIQHHFFLTRWIAEPAREPVFDEDDDVAEERQRVMSGGNKTDILKLNELTKVYSGSSSPAVDRLCVGVRPGECFGLLGVNGAGKTTTFKMLTGDTTVTSGDATVAGKSILTSISDVHQNMGYCPQFDAIDDLLTGREHLYLYARLRGVPSKEIEKVANWGIQSLGLSLYADRLAGTYSGGNKRKLSTAIALTGCPPLLLLDEPTTGMDPQARRMLWNTIVSIIREGRAVVLTSHSMEECEALCTRLAIMVKGTFQCLGTIQHLKYKFGDGYIVTMKIKSPKDDLLPDLNPVEQFFQGNFPGSVQRERHHSMLQFQVPSSSLARIFQLLISHKDSLLIEEYSVTQTTLDQVFVNFAKQQTETYDLPLHPRAAGASWQAKLEEKSGRLQTQEPLPAGSEQLANGSNPTAAEDKHTRSPQ</sequence>
<organism>
    <name type="scientific">Mus musculus</name>
    <name type="common">Mouse</name>
    <dbReference type="NCBI Taxonomy" id="10090"/>
    <lineage>
        <taxon>Eukaryota</taxon>
        <taxon>Metazoa</taxon>
        <taxon>Chordata</taxon>
        <taxon>Craniata</taxon>
        <taxon>Vertebrata</taxon>
        <taxon>Euteleostomi</taxon>
        <taxon>Mammalia</taxon>
        <taxon>Eutheria</taxon>
        <taxon>Euarchontoglires</taxon>
        <taxon>Glires</taxon>
        <taxon>Rodentia</taxon>
        <taxon>Myomorpha</taxon>
        <taxon>Muroidea</taxon>
        <taxon>Muridae</taxon>
        <taxon>Murinae</taxon>
        <taxon>Mus</taxon>
        <taxon>Mus</taxon>
    </lineage>
</organism>
<gene>
    <name evidence="13" type="primary">Abca4</name>
    <name type="synonym">Abcr</name>
</gene>
<evidence type="ECO:0000250" key="1">
    <source>
        <dbReference type="UniProtKB" id="F1MWM0"/>
    </source>
</evidence>
<evidence type="ECO:0000250" key="2">
    <source>
        <dbReference type="UniProtKB" id="P78363"/>
    </source>
</evidence>
<evidence type="ECO:0000255" key="3"/>
<evidence type="ECO:0000255" key="4">
    <source>
        <dbReference type="PROSITE-ProRule" id="PRU00434"/>
    </source>
</evidence>
<evidence type="ECO:0000256" key="5">
    <source>
        <dbReference type="SAM" id="MobiDB-lite"/>
    </source>
</evidence>
<evidence type="ECO:0000269" key="6">
    <source>
    </source>
</evidence>
<evidence type="ECO:0000269" key="7">
    <source>
    </source>
</evidence>
<evidence type="ECO:0000269" key="8">
    <source>
    </source>
</evidence>
<evidence type="ECO:0000269" key="9">
    <source>
    </source>
</evidence>
<evidence type="ECO:0000303" key="10">
    <source>
    </source>
</evidence>
<evidence type="ECO:0000305" key="11"/>
<evidence type="ECO:0000305" key="12">
    <source>
    </source>
</evidence>
<evidence type="ECO:0000312" key="13">
    <source>
        <dbReference type="MGI" id="MGI:109424"/>
    </source>
</evidence>
<reference key="1">
    <citation type="journal article" date="1997" name="FEBS Lett.">
        <title>The photoreceptor rim protein is an ABC transporter encoded by the gene for recessive Stargardt's disease (ABCR).</title>
        <authorList>
            <person name="Azarian S.M."/>
            <person name="Travis G.H."/>
        </authorList>
    </citation>
    <scope>NUCLEOTIDE SEQUENCE [MRNA]</scope>
    <scope>SUBCELLULAR LOCATION</scope>
    <scope>TISSUE SPECIFICITY</scope>
    <source>
        <strain>C57BL/6J</strain>
    </source>
</reference>
<reference key="2">
    <citation type="journal article" date="2004" name="Genome Res.">
        <title>The status, quality, and expansion of the NIH full-length cDNA project: the Mammalian Gene Collection (MGC).</title>
        <authorList>
            <consortium name="The MGC Project Team"/>
        </authorList>
    </citation>
    <scope>NUCLEOTIDE SEQUENCE [LARGE SCALE MRNA]</scope>
    <source>
        <tissue>Eye</tissue>
    </source>
</reference>
<reference key="3">
    <citation type="journal article" date="1999" name="Cell">
        <title>Insights into the function of Rim protein in photoreceptors and etiology of Stargardt's disease from the phenotype in abcr knockout mice.</title>
        <authorList>
            <person name="Weng J."/>
            <person name="Mata N.L."/>
            <person name="Azarian S.M."/>
            <person name="Tzekov R.T."/>
            <person name="Birch D.G."/>
            <person name="Travis G.H."/>
        </authorList>
    </citation>
    <scope>DISRUPTION PHENOTYPE</scope>
    <scope>FUNCTION</scope>
    <scope>CATALYTIC ACTIVITY</scope>
</reference>
<reference key="4">
    <citation type="journal article" date="2000" name="Proc. Natl. Acad. Sci. U.S.A.">
        <title>Biosynthesis of a major lipofuscin fluorophore in mice and humans with ABCR-mediated retinal and macular degeneration.</title>
        <authorList>
            <person name="Mata N.L."/>
            <person name="Weng J."/>
            <person name="Travis G.H."/>
        </authorList>
    </citation>
    <scope>FUNCTION</scope>
    <scope>CATALYTIC ACTIVITY</scope>
</reference>
<reference key="5">
    <citation type="journal article" date="2012" name="Nat. Commun.">
        <title>ABCA4 is an N-retinylidene-phosphatidylethanolamine and phosphatidylethanolamine importer.</title>
        <authorList>
            <person name="Quazi F."/>
            <person name="Lenevich S."/>
            <person name="Molday R.S."/>
        </authorList>
    </citation>
    <scope>FUNCTION</scope>
    <scope>CATALYTIC ACTIVITY</scope>
</reference>
<name>ABCA4_MOUSE</name>
<comment type="function">
    <text evidence="1 2 6 7 8">Flippase that catalyzes in an ATP-dependent manner the transport of retinal-phosphatidylethanolamine conjugates like the 11-cis and all-trans isomers of N-retinylidene-phosphatidylethanolamine from the lumen to the cytoplasmic leaflet of photoreceptor outer segment disk membranes, where N-cis-retinylidene-phosphatidylethanolamine (N-cis-R-PE) is then isomerized to its all-trans isomer (N-trans-R-PE) and reduced by RDH8 to produce all-trans-retinol (all-trans-rol) and therefore prevents the accumulation of excess of 11-cis-retinal and its schiff-base conjugate and the formation of toxic bisretinoid (PubMed:10412977, PubMed:10852960, PubMed:22735453). Displays ATPase activity in vitro in absence of retinal substrate (By similarity). May display GTPase activity that is strongly influenced by the lipid environment and the presence of retinoid compounds (By similarity). Binds the unprotonated form of N-retinylidene-phosphatidylethanolamine with high affinity in the absence of ATP and ATP binding and hydrolysis induce a protein conformational change that causes the dissociation of N-retinylidene-phosphatidylethanolamine (By similarity).</text>
</comment>
<comment type="catalytic activity">
    <reaction evidence="6 7 8">
        <text>an N-all-trans-retinylidenephosphatidylethanolamine(out) + ATP + H2O = an N-all-trans-retinylidenephosphatidylethanolamine(in) + ADP + phosphate + H(+)</text>
        <dbReference type="Rhea" id="RHEA:67188"/>
        <dbReference type="ChEBI" id="CHEBI:15377"/>
        <dbReference type="ChEBI" id="CHEBI:15378"/>
        <dbReference type="ChEBI" id="CHEBI:30616"/>
        <dbReference type="ChEBI" id="CHEBI:43474"/>
        <dbReference type="ChEBI" id="CHEBI:167884"/>
        <dbReference type="ChEBI" id="CHEBI:456216"/>
    </reaction>
    <physiologicalReaction direction="left-to-right" evidence="12">
        <dbReference type="Rhea" id="RHEA:67189"/>
    </physiologicalReaction>
</comment>
<comment type="catalytic activity">
    <reaction evidence="8">
        <text>ATP + H2O + phospholipidSide 1 = ADP + phosphate + phospholipidSide 2.</text>
        <dbReference type="EC" id="7.6.2.1"/>
    </reaction>
</comment>
<comment type="catalytic activity">
    <reaction evidence="8">
        <text>a 1,2-diacyl-sn-glycero-3-phosphoethanolamine(out) + ATP + H2O = a 1,2-diacyl-sn-glycero-3-phosphoethanolamine(in) + ADP + phosphate + H(+)</text>
        <dbReference type="Rhea" id="RHEA:66132"/>
        <dbReference type="ChEBI" id="CHEBI:15377"/>
        <dbReference type="ChEBI" id="CHEBI:15378"/>
        <dbReference type="ChEBI" id="CHEBI:30616"/>
        <dbReference type="ChEBI" id="CHEBI:43474"/>
        <dbReference type="ChEBI" id="CHEBI:64612"/>
        <dbReference type="ChEBI" id="CHEBI:456216"/>
    </reaction>
    <physiologicalReaction direction="left-to-right" evidence="12">
        <dbReference type="Rhea" id="RHEA:66133"/>
    </physiologicalReaction>
</comment>
<comment type="catalytic activity">
    <reaction evidence="1">
        <text>N-11-cis-retinylidenephosphatidylethanolamine(out) + ATP + H2O = N-11-cis-retinylidenephosphatidylethanolamine(in) + ADP + phosphate + H(+)</text>
        <dbReference type="Rhea" id="RHEA:67192"/>
        <dbReference type="ChEBI" id="CHEBI:15377"/>
        <dbReference type="ChEBI" id="CHEBI:15378"/>
        <dbReference type="ChEBI" id="CHEBI:30616"/>
        <dbReference type="ChEBI" id="CHEBI:43474"/>
        <dbReference type="ChEBI" id="CHEBI:167887"/>
        <dbReference type="ChEBI" id="CHEBI:456216"/>
    </reaction>
    <physiologicalReaction direction="left-to-right" evidence="1">
        <dbReference type="Rhea" id="RHEA:67193"/>
    </physiologicalReaction>
</comment>
<comment type="catalytic activity">
    <reaction evidence="2">
        <text>ATP + H2O = ADP + phosphate + H(+)</text>
        <dbReference type="Rhea" id="RHEA:13065"/>
        <dbReference type="ChEBI" id="CHEBI:15377"/>
        <dbReference type="ChEBI" id="CHEBI:15378"/>
        <dbReference type="ChEBI" id="CHEBI:30616"/>
        <dbReference type="ChEBI" id="CHEBI:43474"/>
        <dbReference type="ChEBI" id="CHEBI:456216"/>
    </reaction>
</comment>
<comment type="activity regulation">
    <text evidence="2">ATPase activity is decreased by cholesterol and ceramide. Phospholipids translocase activity is highly reduced by berylium fluoride and aluminum floride. N-ethylmaleimide inhibits phospholipid translocase activity.</text>
</comment>
<comment type="subcellular location">
    <subcellularLocation>
        <location>Membrane</location>
        <topology evidence="3">Multi-pass membrane protein</topology>
    </subcellularLocation>
    <subcellularLocation>
        <location evidence="2">Endoplasmic reticulum</location>
    </subcellularLocation>
    <subcellularLocation>
        <location evidence="9">Cell projection</location>
        <location evidence="9">Cilium</location>
        <location evidence="9">Photoreceptor outer segment</location>
    </subcellularLocation>
    <text evidence="9">Localized to the rim and incisures of rod outer segments disks.</text>
</comment>
<comment type="tissue specificity">
    <text evidence="9">Retinal-specific (PubMed:9202155). Seems to be exclusively found in the rims of rod photoreceptor cells.</text>
</comment>
<comment type="domain">
    <text evidence="2">The second extracellular domain (ECD2, aa 1395-1680) undergoes conformational change in response to its specific interaction with its substrate all-trans-retinal. Nucleotide binding domain 1 (NBD1, aa 854-1375) binds preferentially and with high affinity with the 11-cis retinal.</text>
</comment>
<comment type="PTM">
    <text evidence="1">N-glycosylated.</text>
</comment>
<comment type="PTM">
    <text evidence="1">Proteolytic cleavage by trypsin leads to a 120-kDa N-terminal fragment and a 115-kDa C-terminal fragment that are linked through disulfide bonds.</text>
</comment>
<comment type="PTM">
    <text evidence="1">Phosphorylation is independent of light exposure and modulates ATPase activity.</text>
</comment>
<comment type="disruption phenotype">
    <text evidence="6">Delayed dark adaptation but normal final rod threshold.</text>
</comment>
<comment type="similarity">
    <text evidence="11">Belongs to the ABC transporter superfamily. ABCA family.</text>
</comment>
<accession>O35600</accession>
<protein>
    <recommendedName>
        <fullName evidence="2">Retinal-specific phospholipid-transporting ATPase ABCA4</fullName>
        <ecNumber evidence="2">7.6.2.1</ecNumber>
    </recommendedName>
    <alternativeName>
        <fullName>ATP-binding cassette sub-family A member 4</fullName>
    </alternativeName>
    <alternativeName>
        <fullName>RIM ABC transporter</fullName>
        <shortName evidence="10">RIM protein</shortName>
        <shortName evidence="10">RmP</shortName>
    </alternativeName>
    <alternativeName>
        <fullName>Retinal-specific ATP-binding cassette transporter</fullName>
    </alternativeName>
</protein>
<proteinExistence type="evidence at protein level"/>
<dbReference type="EC" id="7.6.2.1" evidence="2"/>
<dbReference type="EMBL" id="AF000149">
    <property type="protein sequence ID" value="AAC23916.1"/>
    <property type="molecule type" value="mRNA"/>
</dbReference>
<dbReference type="EMBL" id="BC057853">
    <property type="protein sequence ID" value="AAH57853.1"/>
    <property type="molecule type" value="mRNA"/>
</dbReference>
<dbReference type="CCDS" id="CCDS38617.1"/>
<dbReference type="RefSeq" id="NP_031404.1">
    <property type="nucleotide sequence ID" value="NM_007378.1"/>
</dbReference>
<dbReference type="SMR" id="O35600"/>
<dbReference type="BioGRID" id="197901">
    <property type="interactions" value="3"/>
</dbReference>
<dbReference type="FunCoup" id="O35600">
    <property type="interactions" value="259"/>
</dbReference>
<dbReference type="STRING" id="10090.ENSMUSP00000013995"/>
<dbReference type="GlyConnect" id="2683">
    <property type="glycosylation" value="3 N-Linked glycans (1 site)"/>
</dbReference>
<dbReference type="GlyCosmos" id="O35600">
    <property type="glycosylation" value="8 sites, 3 glycans"/>
</dbReference>
<dbReference type="GlyGen" id="O35600">
    <property type="glycosylation" value="8 sites, 8 N-linked glycans (6 sites)"/>
</dbReference>
<dbReference type="iPTMnet" id="O35600"/>
<dbReference type="PhosphoSitePlus" id="O35600"/>
<dbReference type="SwissPalm" id="O35600"/>
<dbReference type="PaxDb" id="10090-ENSMUSP00000013995"/>
<dbReference type="ProteomicsDB" id="285899"/>
<dbReference type="Antibodypedia" id="33661">
    <property type="antibodies" value="187 antibodies from 33 providers"/>
</dbReference>
<dbReference type="DNASU" id="11304"/>
<dbReference type="Ensembl" id="ENSMUST00000013995.13">
    <property type="protein sequence ID" value="ENSMUSP00000013995.9"/>
    <property type="gene ID" value="ENSMUSG00000028125.15"/>
</dbReference>
<dbReference type="GeneID" id="11304"/>
<dbReference type="KEGG" id="mmu:11304"/>
<dbReference type="UCSC" id="uc008rel.1">
    <property type="organism name" value="mouse"/>
</dbReference>
<dbReference type="AGR" id="MGI:109424"/>
<dbReference type="CTD" id="24"/>
<dbReference type="MGI" id="MGI:109424">
    <property type="gene designation" value="Abca4"/>
</dbReference>
<dbReference type="VEuPathDB" id="HostDB:ENSMUSG00000028125"/>
<dbReference type="eggNOG" id="KOG0059">
    <property type="taxonomic scope" value="Eukaryota"/>
</dbReference>
<dbReference type="GeneTree" id="ENSGT00940000155624"/>
<dbReference type="HOGENOM" id="CLU_000604_19_0_1"/>
<dbReference type="InParanoid" id="O35600"/>
<dbReference type="OMA" id="FMWNVIA"/>
<dbReference type="OrthoDB" id="10255969at2759"/>
<dbReference type="PhylomeDB" id="O35600"/>
<dbReference type="TreeFam" id="TF105191"/>
<dbReference type="Reactome" id="R-MMU-2453902">
    <property type="pathway name" value="The canonical retinoid cycle in rods (twilight vision)"/>
</dbReference>
<dbReference type="Reactome" id="R-MMU-382556">
    <property type="pathway name" value="ABC-family proteins mediated transport"/>
</dbReference>
<dbReference type="BioGRID-ORCS" id="11304">
    <property type="hits" value="2 hits in 79 CRISPR screens"/>
</dbReference>
<dbReference type="ChiTaRS" id="Abca4">
    <property type="organism name" value="mouse"/>
</dbReference>
<dbReference type="PRO" id="PR:O35600"/>
<dbReference type="Proteomes" id="UP000000589">
    <property type="component" value="Chromosome 3"/>
</dbReference>
<dbReference type="RNAct" id="O35600">
    <property type="molecule type" value="protein"/>
</dbReference>
<dbReference type="Bgee" id="ENSMUSG00000028125">
    <property type="expression patterns" value="Expressed in retinal neural layer and 78 other cell types or tissues"/>
</dbReference>
<dbReference type="ExpressionAtlas" id="O35600">
    <property type="expression patterns" value="baseline and differential"/>
</dbReference>
<dbReference type="GO" id="GO:0031410">
    <property type="term" value="C:cytoplasmic vesicle"/>
    <property type="evidence" value="ECO:0000250"/>
    <property type="project" value="UniProtKB"/>
</dbReference>
<dbReference type="GO" id="GO:0005783">
    <property type="term" value="C:endoplasmic reticulum"/>
    <property type="evidence" value="ECO:0000250"/>
    <property type="project" value="UniProtKB"/>
</dbReference>
<dbReference type="GO" id="GO:0001750">
    <property type="term" value="C:photoreceptor outer segment"/>
    <property type="evidence" value="ECO:0000314"/>
    <property type="project" value="UniProtKB"/>
</dbReference>
<dbReference type="GO" id="GO:0005886">
    <property type="term" value="C:plasma membrane"/>
    <property type="evidence" value="ECO:0000304"/>
    <property type="project" value="MGI"/>
</dbReference>
<dbReference type="GO" id="GO:0120202">
    <property type="term" value="C:rod photoreceptor disc membrane"/>
    <property type="evidence" value="ECO:0000250"/>
    <property type="project" value="UniProtKB"/>
</dbReference>
<dbReference type="GO" id="GO:0005502">
    <property type="term" value="F:11-cis retinal binding"/>
    <property type="evidence" value="ECO:0000250"/>
    <property type="project" value="UniProtKB"/>
</dbReference>
<dbReference type="GO" id="GO:0140359">
    <property type="term" value="F:ABC-type transporter activity"/>
    <property type="evidence" value="ECO:0007669"/>
    <property type="project" value="InterPro"/>
</dbReference>
<dbReference type="GO" id="GO:0005503">
    <property type="term" value="F:all-trans retinal binding"/>
    <property type="evidence" value="ECO:0000250"/>
    <property type="project" value="UniProtKB"/>
</dbReference>
<dbReference type="GO" id="GO:0005524">
    <property type="term" value="F:ATP binding"/>
    <property type="evidence" value="ECO:0007669"/>
    <property type="project" value="UniProtKB-KW"/>
</dbReference>
<dbReference type="GO" id="GO:0016887">
    <property type="term" value="F:ATP hydrolysis activity"/>
    <property type="evidence" value="ECO:0000250"/>
    <property type="project" value="UniProtKB"/>
</dbReference>
<dbReference type="GO" id="GO:0140326">
    <property type="term" value="F:ATPase-coupled intramembrane lipid transporter activity"/>
    <property type="evidence" value="ECO:0000315"/>
    <property type="project" value="MGI"/>
</dbReference>
<dbReference type="GO" id="GO:0042626">
    <property type="term" value="F:ATPase-coupled transmembrane transporter activity"/>
    <property type="evidence" value="ECO:0000304"/>
    <property type="project" value="MGI"/>
</dbReference>
<dbReference type="GO" id="GO:0140327">
    <property type="term" value="F:flippase activity"/>
    <property type="evidence" value="ECO:0000250"/>
    <property type="project" value="UniProtKB"/>
</dbReference>
<dbReference type="GO" id="GO:0003924">
    <property type="term" value="F:GTPase activity"/>
    <property type="evidence" value="ECO:0000250"/>
    <property type="project" value="UniProtKB"/>
</dbReference>
<dbReference type="GO" id="GO:0140347">
    <property type="term" value="F:N-retinylidene-phosphatidylethanolamine flippase activity"/>
    <property type="evidence" value="ECO:0000315"/>
    <property type="project" value="UniProtKB"/>
</dbReference>
<dbReference type="GO" id="GO:0090555">
    <property type="term" value="F:phosphatidylethanolamine flippase activity"/>
    <property type="evidence" value="ECO:0007669"/>
    <property type="project" value="Ensembl"/>
</dbReference>
<dbReference type="GO" id="GO:0005501">
    <property type="term" value="F:retinoid binding"/>
    <property type="evidence" value="ECO:0000250"/>
    <property type="project" value="UniProtKB"/>
</dbReference>
<dbReference type="GO" id="GO:0006649">
    <property type="term" value="P:phospholipid transfer to membrane"/>
    <property type="evidence" value="ECO:0000315"/>
    <property type="project" value="MGI"/>
</dbReference>
<dbReference type="GO" id="GO:0045332">
    <property type="term" value="P:phospholipid translocation"/>
    <property type="evidence" value="ECO:0007669"/>
    <property type="project" value="Ensembl"/>
</dbReference>
<dbReference type="GO" id="GO:0045494">
    <property type="term" value="P:photoreceptor cell maintenance"/>
    <property type="evidence" value="ECO:0000315"/>
    <property type="project" value="MGI"/>
</dbReference>
<dbReference type="GO" id="GO:0042574">
    <property type="term" value="P:retinal metabolic process"/>
    <property type="evidence" value="ECO:0000250"/>
    <property type="project" value="UniProtKB"/>
</dbReference>
<dbReference type="GO" id="GO:0001523">
    <property type="term" value="P:retinoid metabolic process"/>
    <property type="evidence" value="ECO:0000250"/>
    <property type="project" value="UniProtKB"/>
</dbReference>
<dbReference type="GO" id="GO:0007601">
    <property type="term" value="P:visual perception"/>
    <property type="evidence" value="ECO:0000315"/>
    <property type="project" value="MGI"/>
</dbReference>
<dbReference type="CDD" id="cd03263">
    <property type="entry name" value="ABC_subfamily_A"/>
    <property type="match status" value="2"/>
</dbReference>
<dbReference type="FunFam" id="3.40.50.300:FF:000232">
    <property type="entry name" value="ATP-binding cassette, sub-family A (ABC1), member 1"/>
    <property type="match status" value="1"/>
</dbReference>
<dbReference type="FunFam" id="3.40.50.300:FF:000264">
    <property type="entry name" value="ATP-binding cassette, sub-family A (ABC1), member 1"/>
    <property type="match status" value="1"/>
</dbReference>
<dbReference type="Gene3D" id="3.40.50.300">
    <property type="entry name" value="P-loop containing nucleotide triphosphate hydrolases"/>
    <property type="match status" value="2"/>
</dbReference>
<dbReference type="InterPro" id="IPR003593">
    <property type="entry name" value="AAA+_ATPase"/>
</dbReference>
<dbReference type="InterPro" id="IPR013525">
    <property type="entry name" value="ABC2_TM"/>
</dbReference>
<dbReference type="InterPro" id="IPR003439">
    <property type="entry name" value="ABC_transporter-like_ATP-bd"/>
</dbReference>
<dbReference type="InterPro" id="IPR017871">
    <property type="entry name" value="ABC_transporter-like_CS"/>
</dbReference>
<dbReference type="InterPro" id="IPR026082">
    <property type="entry name" value="ABCA"/>
</dbReference>
<dbReference type="InterPro" id="IPR005951">
    <property type="entry name" value="ABCA4/ABCR"/>
</dbReference>
<dbReference type="InterPro" id="IPR027417">
    <property type="entry name" value="P-loop_NTPase"/>
</dbReference>
<dbReference type="InterPro" id="IPR056264">
    <property type="entry name" value="R2_ABCA1-4-like"/>
</dbReference>
<dbReference type="NCBIfam" id="TIGR01257">
    <property type="entry name" value="rim_protein"/>
    <property type="match status" value="1"/>
</dbReference>
<dbReference type="PANTHER" id="PTHR19229:SF250">
    <property type="entry name" value="ABC TRANSPORTER DOMAIN-CONTAINING PROTEIN-RELATED"/>
    <property type="match status" value="1"/>
</dbReference>
<dbReference type="PANTHER" id="PTHR19229">
    <property type="entry name" value="ATP-BINDING CASSETTE TRANSPORTER SUBFAMILY A ABCA"/>
    <property type="match status" value="1"/>
</dbReference>
<dbReference type="Pfam" id="PF12698">
    <property type="entry name" value="ABC2_membrane_3"/>
    <property type="match status" value="2"/>
</dbReference>
<dbReference type="Pfam" id="PF00005">
    <property type="entry name" value="ABC_tran"/>
    <property type="match status" value="2"/>
</dbReference>
<dbReference type="Pfam" id="PF23321">
    <property type="entry name" value="R1_ABCA1"/>
    <property type="match status" value="1"/>
</dbReference>
<dbReference type="SMART" id="SM00382">
    <property type="entry name" value="AAA"/>
    <property type="match status" value="2"/>
</dbReference>
<dbReference type="SUPFAM" id="SSF52540">
    <property type="entry name" value="P-loop containing nucleoside triphosphate hydrolases"/>
    <property type="match status" value="2"/>
</dbReference>
<dbReference type="PROSITE" id="PS00211">
    <property type="entry name" value="ABC_TRANSPORTER_1"/>
    <property type="match status" value="1"/>
</dbReference>
<dbReference type="PROSITE" id="PS50893">
    <property type="entry name" value="ABC_TRANSPORTER_2"/>
    <property type="match status" value="2"/>
</dbReference>